<protein>
    <recommendedName>
        <fullName>Serine/threonine-protein kinase chk1</fullName>
        <ecNumber>2.7.11.1</ecNumber>
    </recommendedName>
    <alternativeName>
        <fullName>Checkpoint kinase 1</fullName>
    </alternativeName>
</protein>
<keyword id="KW-0067">ATP-binding</keyword>
<keyword id="KW-0131">Cell cycle</keyword>
<keyword id="KW-0227">DNA damage</keyword>
<keyword id="KW-0418">Kinase</keyword>
<keyword id="KW-0547">Nucleotide-binding</keyword>
<keyword id="KW-0539">Nucleus</keyword>
<keyword id="KW-0597">Phosphoprotein</keyword>
<keyword id="KW-1185">Reference proteome</keyword>
<keyword id="KW-0723">Serine/threonine-protein kinase</keyword>
<keyword id="KW-0808">Transferase</keyword>
<name>CHK1_SCHPO</name>
<proteinExistence type="evidence at protein level"/>
<dbReference type="EC" id="2.7.11.1"/>
<dbReference type="EMBL" id="L13742">
    <property type="protein sequence ID" value="AAA79758.1"/>
    <property type="molecule type" value="Genomic_DNA"/>
</dbReference>
<dbReference type="EMBL" id="U37421">
    <property type="protein sequence ID" value="AAA80539.1"/>
    <property type="molecule type" value="mRNA"/>
</dbReference>
<dbReference type="EMBL" id="CU329672">
    <property type="protein sequence ID" value="CAA22551.1"/>
    <property type="molecule type" value="Genomic_DNA"/>
</dbReference>
<dbReference type="EMBL" id="D85545">
    <property type="protein sequence ID" value="BAA20374.1"/>
    <property type="molecule type" value="Genomic_DNA"/>
</dbReference>
<dbReference type="PIR" id="S33597">
    <property type="entry name" value="S33597"/>
</dbReference>
<dbReference type="RefSeq" id="NP_588070.1">
    <property type="nucleotide sequence ID" value="NM_001023062.2"/>
</dbReference>
<dbReference type="SMR" id="P34208"/>
<dbReference type="BioGRID" id="275659">
    <property type="interactions" value="112"/>
</dbReference>
<dbReference type="FunCoup" id="P34208">
    <property type="interactions" value="571"/>
</dbReference>
<dbReference type="IntAct" id="P34208">
    <property type="interactions" value="9"/>
</dbReference>
<dbReference type="STRING" id="284812.P34208"/>
<dbReference type="iPTMnet" id="P34208"/>
<dbReference type="PaxDb" id="4896-SPCC1259.13.1"/>
<dbReference type="EnsemblFungi" id="SPCC1259.13.1">
    <property type="protein sequence ID" value="SPCC1259.13.1:pep"/>
    <property type="gene ID" value="SPCC1259.13"/>
</dbReference>
<dbReference type="PomBase" id="SPCC1259.13">
    <property type="gene designation" value="chk1"/>
</dbReference>
<dbReference type="VEuPathDB" id="FungiDB:SPCC1259.13"/>
<dbReference type="eggNOG" id="KOG0590">
    <property type="taxonomic scope" value="Eukaryota"/>
</dbReference>
<dbReference type="HOGENOM" id="CLU_000288_59_8_1"/>
<dbReference type="InParanoid" id="P34208"/>
<dbReference type="OMA" id="ACIKKAC"/>
<dbReference type="PhylomeDB" id="P34208"/>
<dbReference type="BRENDA" id="2.7.11.1">
    <property type="organism ID" value="5613"/>
</dbReference>
<dbReference type="PRO" id="PR:P34208"/>
<dbReference type="Proteomes" id="UP000002485">
    <property type="component" value="Chromosome III"/>
</dbReference>
<dbReference type="GO" id="GO:0000785">
    <property type="term" value="C:chromatin"/>
    <property type="evidence" value="ECO:0000314"/>
    <property type="project" value="PomBase"/>
</dbReference>
<dbReference type="GO" id="GO:0005737">
    <property type="term" value="C:cytoplasm"/>
    <property type="evidence" value="ECO:0000314"/>
    <property type="project" value="PomBase"/>
</dbReference>
<dbReference type="GO" id="GO:0005829">
    <property type="term" value="C:cytosol"/>
    <property type="evidence" value="ECO:0007005"/>
    <property type="project" value="PomBase"/>
</dbReference>
<dbReference type="GO" id="GO:0005654">
    <property type="term" value="C:nucleoplasm"/>
    <property type="evidence" value="ECO:0000304"/>
    <property type="project" value="Reactome"/>
</dbReference>
<dbReference type="GO" id="GO:0005634">
    <property type="term" value="C:nucleus"/>
    <property type="evidence" value="ECO:0000314"/>
    <property type="project" value="PomBase"/>
</dbReference>
<dbReference type="GO" id="GO:0035861">
    <property type="term" value="C:site of double-strand break"/>
    <property type="evidence" value="ECO:0000314"/>
    <property type="project" value="PomBase"/>
</dbReference>
<dbReference type="GO" id="GO:0005524">
    <property type="term" value="F:ATP binding"/>
    <property type="evidence" value="ECO:0000255"/>
    <property type="project" value="PomBase"/>
</dbReference>
<dbReference type="GO" id="GO:0106310">
    <property type="term" value="F:protein serine kinase activity"/>
    <property type="evidence" value="ECO:0007669"/>
    <property type="project" value="RHEA"/>
</dbReference>
<dbReference type="GO" id="GO:0004674">
    <property type="term" value="F:protein serine/threonine kinase activity"/>
    <property type="evidence" value="ECO:0000314"/>
    <property type="project" value="PomBase"/>
</dbReference>
<dbReference type="GO" id="GO:0051598">
    <property type="term" value="P:meiotic recombination checkpoint signaling"/>
    <property type="evidence" value="ECO:0000315"/>
    <property type="project" value="PomBase"/>
</dbReference>
<dbReference type="GO" id="GO:0044773">
    <property type="term" value="P:mitotic DNA damage checkpoint signaling"/>
    <property type="evidence" value="ECO:0000315"/>
    <property type="project" value="PomBase"/>
</dbReference>
<dbReference type="GO" id="GO:0007095">
    <property type="term" value="P:mitotic G2 DNA damage checkpoint signaling"/>
    <property type="evidence" value="ECO:0000314"/>
    <property type="project" value="PomBase"/>
</dbReference>
<dbReference type="GO" id="GO:0010972">
    <property type="term" value="P:negative regulation of G2/M transition of mitotic cell cycle"/>
    <property type="evidence" value="ECO:0000316"/>
    <property type="project" value="PomBase"/>
</dbReference>
<dbReference type="GO" id="GO:0000122">
    <property type="term" value="P:negative regulation of transcription by RNA polymerase II"/>
    <property type="evidence" value="ECO:0000315"/>
    <property type="project" value="PomBase"/>
</dbReference>
<dbReference type="CDD" id="cd14069">
    <property type="entry name" value="STKc_Chk1"/>
    <property type="match status" value="1"/>
</dbReference>
<dbReference type="FunFam" id="1.10.510.10:FF:000571">
    <property type="entry name" value="Maternal embryonic leucine zipper kinase"/>
    <property type="match status" value="1"/>
</dbReference>
<dbReference type="Gene3D" id="1.10.510.10">
    <property type="entry name" value="Transferase(Phosphotransferase) domain 1"/>
    <property type="match status" value="1"/>
</dbReference>
<dbReference type="InterPro" id="IPR034670">
    <property type="entry name" value="Chk1_catalytic_dom"/>
</dbReference>
<dbReference type="InterPro" id="IPR011009">
    <property type="entry name" value="Kinase-like_dom_sf"/>
</dbReference>
<dbReference type="InterPro" id="IPR000719">
    <property type="entry name" value="Prot_kinase_dom"/>
</dbReference>
<dbReference type="InterPro" id="IPR017441">
    <property type="entry name" value="Protein_kinase_ATP_BS"/>
</dbReference>
<dbReference type="InterPro" id="IPR008271">
    <property type="entry name" value="Ser/Thr_kinase_AS"/>
</dbReference>
<dbReference type="PANTHER" id="PTHR43895">
    <property type="entry name" value="CALCIUM/CALMODULIN-DEPENDENT PROTEIN KINASE KINASE-RELATED"/>
    <property type="match status" value="1"/>
</dbReference>
<dbReference type="PANTHER" id="PTHR43895:SF32">
    <property type="entry name" value="SERINE_THREONINE-PROTEIN KINASE CHK1"/>
    <property type="match status" value="1"/>
</dbReference>
<dbReference type="Pfam" id="PF00069">
    <property type="entry name" value="Pkinase"/>
    <property type="match status" value="1"/>
</dbReference>
<dbReference type="SMART" id="SM00220">
    <property type="entry name" value="S_TKc"/>
    <property type="match status" value="1"/>
</dbReference>
<dbReference type="SUPFAM" id="SSF56112">
    <property type="entry name" value="Protein kinase-like (PK-like)"/>
    <property type="match status" value="1"/>
</dbReference>
<dbReference type="PROSITE" id="PS00107">
    <property type="entry name" value="PROTEIN_KINASE_ATP"/>
    <property type="match status" value="1"/>
</dbReference>
<dbReference type="PROSITE" id="PS50011">
    <property type="entry name" value="PROTEIN_KINASE_DOM"/>
    <property type="match status" value="1"/>
</dbReference>
<dbReference type="PROSITE" id="PS00108">
    <property type="entry name" value="PROTEIN_KINASE_ST"/>
    <property type="match status" value="1"/>
</dbReference>
<organism>
    <name type="scientific">Schizosaccharomyces pombe (strain 972 / ATCC 24843)</name>
    <name type="common">Fission yeast</name>
    <dbReference type="NCBI Taxonomy" id="284812"/>
    <lineage>
        <taxon>Eukaryota</taxon>
        <taxon>Fungi</taxon>
        <taxon>Dikarya</taxon>
        <taxon>Ascomycota</taxon>
        <taxon>Taphrinomycotina</taxon>
        <taxon>Schizosaccharomycetes</taxon>
        <taxon>Schizosaccharomycetales</taxon>
        <taxon>Schizosaccharomycetaceae</taxon>
        <taxon>Schizosaccharomyces</taxon>
    </lineage>
</organism>
<gene>
    <name type="primary">chk1</name>
    <name type="synonym">rad27</name>
    <name type="ORF">SPCC1259.13</name>
</gene>
<sequence length="496" mass="56506">MAQKLDNFPYHIGREIGTGAFASVRLCYDDNAKIYAVKFVNKKHATSCMNAGVWARRMASEIQLHKLCNGHKNIIHFYNTAENPQWRWVVLEFAQGGDLFDKIEPDVGIDEDVAQFYFAQLMEGISFMHSKGVAHRDLKPENILLDYNGNLKISDFGFASLFSYKGKSRLLNSPVGSPPYAAPEITQQYDGSKVDVWSCGIILFALLLGNTPWDEAISNTGDYLLYKKQCERPSYHPWNLLSPGAYSIITGMLRSDPFKRYSVKHVVQHPWLTSSTPFRTKNGNCADPVALASRLMLKLRIDLDKPRLASSRASQNDSGFSMTQPAFKKNDQKELDRVEVYGALSQPVQLNKNIDVTEILEKDPSLSQFCENEGFIKRLAKKAKNFYEICPPERLTRFYSRASRETIIDHLYDSLRLLAISVTMKYVRNQTILYVNLHDKRKCLLQGVIELTNLGHNLELINFIKRNGDPLEWRKFFKNVVSSIGKPIVLTDVSQN</sequence>
<evidence type="ECO:0000250" key="1"/>
<evidence type="ECO:0000255" key="2">
    <source>
        <dbReference type="PROSITE-ProRule" id="PRU00159"/>
    </source>
</evidence>
<evidence type="ECO:0000255" key="3">
    <source>
        <dbReference type="PROSITE-ProRule" id="PRU10027"/>
    </source>
</evidence>
<evidence type="ECO:0000269" key="4">
    <source>
    </source>
</evidence>
<evidence type="ECO:0000269" key="5">
    <source>
    </source>
</evidence>
<evidence type="ECO:0000269" key="6">
    <source>
    </source>
</evidence>
<evidence type="ECO:0000269" key="7">
    <source>
    </source>
</evidence>
<evidence type="ECO:0000269" key="8">
    <source>
    </source>
</evidence>
<evidence type="ECO:0000269" key="9">
    <source>
    </source>
</evidence>
<evidence type="ECO:0000305" key="10"/>
<comment type="function">
    <text evidence="7 8">Serine/threonine-protein kinase which is required for checkpoint-mediated cell cycle arrest and activation of DNA repair in response to the presence of DNA damage or unreplicated DNA (PubMed:8497322). May also negatively regulate cell cycle progression during unperturbed cell cycles. Binds to and phosphorylates CDC25. This leads to negative regulation of CDC25 and prevents mitotic entry (PubMed:9278510).</text>
</comment>
<comment type="catalytic activity">
    <reaction>
        <text>L-seryl-[protein] + ATP = O-phospho-L-seryl-[protein] + ADP + H(+)</text>
        <dbReference type="Rhea" id="RHEA:17989"/>
        <dbReference type="Rhea" id="RHEA-COMP:9863"/>
        <dbReference type="Rhea" id="RHEA-COMP:11604"/>
        <dbReference type="ChEBI" id="CHEBI:15378"/>
        <dbReference type="ChEBI" id="CHEBI:29999"/>
        <dbReference type="ChEBI" id="CHEBI:30616"/>
        <dbReference type="ChEBI" id="CHEBI:83421"/>
        <dbReference type="ChEBI" id="CHEBI:456216"/>
        <dbReference type="EC" id="2.7.11.1"/>
    </reaction>
</comment>
<comment type="catalytic activity">
    <reaction>
        <text>L-threonyl-[protein] + ATP = O-phospho-L-threonyl-[protein] + ADP + H(+)</text>
        <dbReference type="Rhea" id="RHEA:46608"/>
        <dbReference type="Rhea" id="RHEA-COMP:11060"/>
        <dbReference type="Rhea" id="RHEA-COMP:11605"/>
        <dbReference type="ChEBI" id="CHEBI:15378"/>
        <dbReference type="ChEBI" id="CHEBI:30013"/>
        <dbReference type="ChEBI" id="CHEBI:30616"/>
        <dbReference type="ChEBI" id="CHEBI:61977"/>
        <dbReference type="ChEBI" id="CHEBI:456216"/>
        <dbReference type="EC" id="2.7.11.1"/>
    </reaction>
</comment>
<comment type="subunit">
    <text evidence="4 5 6 9">Interacts with crb2 (PubMed:14739927, PubMed:22792081, PubMed:9407031). Interacts with rad3 (PubMed:14739927). Interacts with rfp1 (PubMed:17502373).</text>
</comment>
<comment type="interaction">
    <interactant intactId="EBI-768535">
        <id>P34208</id>
    </interactant>
    <interactant intactId="EBI-768448">
        <id>P87074</id>
        <label>crb2</label>
    </interactant>
    <organismsDiffer>false</organismsDiffer>
    <experiments>4</experiments>
</comment>
<comment type="interaction">
    <interactant intactId="EBI-768535">
        <id>P34208</id>
    </interactant>
    <interactant intactId="EBI-3647269">
        <id>O13826</id>
        <label>rfp1</label>
    </interactant>
    <organismsDiffer>false</organismsDiffer>
    <experiments>3</experiments>
</comment>
<comment type="subcellular location">
    <subcellularLocation>
        <location evidence="1">Nucleus</location>
    </subcellularLocation>
</comment>
<comment type="PTM">
    <text>Phosphorylated.</text>
</comment>
<comment type="similarity">
    <text evidence="10">Belongs to the protein kinase superfamily. CAMK Ser/Thr protein kinase family. NIM1 subfamily.</text>
</comment>
<accession>P34208</accession>
<feature type="chain" id="PRO_0000085856" description="Serine/threonine-protein kinase chk1">
    <location>
        <begin position="1"/>
        <end position="496"/>
    </location>
</feature>
<feature type="domain" description="Protein kinase" evidence="2">
    <location>
        <begin position="10"/>
        <end position="272"/>
    </location>
</feature>
<feature type="active site" description="Proton acceptor" evidence="2 3">
    <location>
        <position position="137"/>
    </location>
</feature>
<feature type="binding site" evidence="2">
    <location>
        <begin position="16"/>
        <end position="24"/>
    </location>
    <ligand>
        <name>ATP</name>
        <dbReference type="ChEBI" id="CHEBI:30616"/>
    </ligand>
</feature>
<feature type="binding site" evidence="2">
    <location>
        <position position="38"/>
    </location>
    <ligand>
        <name>ATP</name>
        <dbReference type="ChEBI" id="CHEBI:30616"/>
    </ligand>
</feature>
<reference key="1">
    <citation type="journal article" date="1993" name="Nature">
        <title>Fission yeast chk1 protein kinase links the rad checkpoint pathway to cdc2.</title>
        <authorList>
            <person name="Walworth N."/>
            <person name="Davey S."/>
            <person name="Beach D."/>
        </authorList>
    </citation>
    <scope>NUCLEOTIDE SEQUENCE [GENOMIC DNA / MRNA]</scope>
    <scope>FUNCTION</scope>
</reference>
<reference key="2">
    <citation type="journal article" date="1994" name="Mol. Biol. Cell">
        <title>Identification and characterization of new elements involved in checkpoint and feedback controls in fission yeast.</title>
        <authorList>
            <person name="Al-Khodairy F."/>
            <person name="Fotou E."/>
            <person name="Sheldrick K.S."/>
            <person name="Griffiths D.J.F."/>
            <person name="Lehmann A.R."/>
            <person name="Carr A.M."/>
        </authorList>
    </citation>
    <scope>NUCLEOTIDE SEQUENCE [GENOMIC DNA / MRNA]</scope>
</reference>
<reference key="3">
    <citation type="journal article" date="2002" name="Nature">
        <title>The genome sequence of Schizosaccharomyces pombe.</title>
        <authorList>
            <person name="Wood V."/>
            <person name="Gwilliam R."/>
            <person name="Rajandream M.A."/>
            <person name="Lyne M.H."/>
            <person name="Lyne R."/>
            <person name="Stewart A."/>
            <person name="Sgouros J.G."/>
            <person name="Peat N."/>
            <person name="Hayles J."/>
            <person name="Baker S.G."/>
            <person name="Basham D."/>
            <person name="Bowman S."/>
            <person name="Brooks K."/>
            <person name="Brown D."/>
            <person name="Brown S."/>
            <person name="Chillingworth T."/>
            <person name="Churcher C.M."/>
            <person name="Collins M."/>
            <person name="Connor R."/>
            <person name="Cronin A."/>
            <person name="Davis P."/>
            <person name="Feltwell T."/>
            <person name="Fraser A."/>
            <person name="Gentles S."/>
            <person name="Goble A."/>
            <person name="Hamlin N."/>
            <person name="Harris D.E."/>
            <person name="Hidalgo J."/>
            <person name="Hodgson G."/>
            <person name="Holroyd S."/>
            <person name="Hornsby T."/>
            <person name="Howarth S."/>
            <person name="Huckle E.J."/>
            <person name="Hunt S."/>
            <person name="Jagels K."/>
            <person name="James K.D."/>
            <person name="Jones L."/>
            <person name="Jones M."/>
            <person name="Leather S."/>
            <person name="McDonald S."/>
            <person name="McLean J."/>
            <person name="Mooney P."/>
            <person name="Moule S."/>
            <person name="Mungall K.L."/>
            <person name="Murphy L.D."/>
            <person name="Niblett D."/>
            <person name="Odell C."/>
            <person name="Oliver K."/>
            <person name="O'Neil S."/>
            <person name="Pearson D."/>
            <person name="Quail M.A."/>
            <person name="Rabbinowitsch E."/>
            <person name="Rutherford K.M."/>
            <person name="Rutter S."/>
            <person name="Saunders D."/>
            <person name="Seeger K."/>
            <person name="Sharp S."/>
            <person name="Skelton J."/>
            <person name="Simmonds M.N."/>
            <person name="Squares R."/>
            <person name="Squares S."/>
            <person name="Stevens K."/>
            <person name="Taylor K."/>
            <person name="Taylor R.G."/>
            <person name="Tivey A."/>
            <person name="Walsh S.V."/>
            <person name="Warren T."/>
            <person name="Whitehead S."/>
            <person name="Woodward J.R."/>
            <person name="Volckaert G."/>
            <person name="Aert R."/>
            <person name="Robben J."/>
            <person name="Grymonprez B."/>
            <person name="Weltjens I."/>
            <person name="Vanstreels E."/>
            <person name="Rieger M."/>
            <person name="Schaefer M."/>
            <person name="Mueller-Auer S."/>
            <person name="Gabel C."/>
            <person name="Fuchs M."/>
            <person name="Duesterhoeft A."/>
            <person name="Fritzc C."/>
            <person name="Holzer E."/>
            <person name="Moestl D."/>
            <person name="Hilbert H."/>
            <person name="Borzym K."/>
            <person name="Langer I."/>
            <person name="Beck A."/>
            <person name="Lehrach H."/>
            <person name="Reinhardt R."/>
            <person name="Pohl T.M."/>
            <person name="Eger P."/>
            <person name="Zimmermann W."/>
            <person name="Wedler H."/>
            <person name="Wambutt R."/>
            <person name="Purnelle B."/>
            <person name="Goffeau A."/>
            <person name="Cadieu E."/>
            <person name="Dreano S."/>
            <person name="Gloux S."/>
            <person name="Lelaure V."/>
            <person name="Mottier S."/>
            <person name="Galibert F."/>
            <person name="Aves S.J."/>
            <person name="Xiang Z."/>
            <person name="Hunt C."/>
            <person name="Moore K."/>
            <person name="Hurst S.M."/>
            <person name="Lucas M."/>
            <person name="Rochet M."/>
            <person name="Gaillardin C."/>
            <person name="Tallada V.A."/>
            <person name="Garzon A."/>
            <person name="Thode G."/>
            <person name="Daga R.R."/>
            <person name="Cruzado L."/>
            <person name="Jimenez J."/>
            <person name="Sanchez M."/>
            <person name="del Rey F."/>
            <person name="Benito J."/>
            <person name="Dominguez A."/>
            <person name="Revuelta J.L."/>
            <person name="Moreno S."/>
            <person name="Armstrong J."/>
            <person name="Forsburg S.L."/>
            <person name="Cerutti L."/>
            <person name="Lowe T."/>
            <person name="McCombie W.R."/>
            <person name="Paulsen I."/>
            <person name="Potashkin J."/>
            <person name="Shpakovski G.V."/>
            <person name="Ussery D."/>
            <person name="Barrell B.G."/>
            <person name="Nurse P."/>
        </authorList>
    </citation>
    <scope>NUCLEOTIDE SEQUENCE [LARGE SCALE GENOMIC DNA]</scope>
    <source>
        <strain>972 / ATCC 24843</strain>
    </source>
</reference>
<reference key="4">
    <citation type="journal article" date="1997" name="Mol. Cell. Biol.">
        <title>A ubiquitin-conjugating enzyme in fission yeast that is essential for the onset of anaphase in mitosis.</title>
        <authorList>
            <person name="Osaka F."/>
            <person name="Seino H."/>
            <person name="Seno T."/>
            <person name="Yamao F."/>
        </authorList>
    </citation>
    <scope>NUCLEOTIDE SEQUENCE [GENOMIC DNA] OF 1-11</scope>
    <source>
        <strain>972 / ATCC 24843</strain>
    </source>
</reference>
<reference key="5">
    <citation type="journal article" date="1997" name="Genes Dev.">
        <title>Damage and replication checkpoint control in fission yeast is ensured by interactions of Crb2, a protein with BRCT motif, with Cut5 and Chk1.</title>
        <authorList>
            <person name="Saka Y."/>
            <person name="Esashi F."/>
            <person name="Matsusaka T."/>
            <person name="Mochida S."/>
            <person name="Yanagida M."/>
        </authorList>
    </citation>
    <scope>INTERACTION WITH CRB2</scope>
    <source>
        <strain>972 / ATCC 24843</strain>
    </source>
</reference>
<reference key="6">
    <citation type="journal article" date="1997" name="Science">
        <title>Cdc25 mitotic inducer targeted by chk1 DNA damage checkpoint kinase.</title>
        <authorList>
            <person name="Furnari B."/>
            <person name="Rhind N."/>
            <person name="Russell P."/>
        </authorList>
    </citation>
    <scope>FUNCTION</scope>
</reference>
<reference key="7">
    <citation type="journal article" date="2004" name="EMBO J.">
        <title>Regulation of checkpoint kinases through dynamic interaction with Crb2.</title>
        <authorList>
            <person name="Mochida S."/>
            <person name="Esashi F."/>
            <person name="Aono N."/>
            <person name="Tamai K."/>
            <person name="O'Connell M.J."/>
            <person name="Yanagida M."/>
        </authorList>
    </citation>
    <scope>INTERACTION WITH CRB2 AND RAD3</scope>
</reference>
<reference key="8">
    <citation type="journal article" date="2007" name="J. Biol. Chem.">
        <title>Fission yeast Rnf4 homologs are required for DNA repair.</title>
        <authorList>
            <person name="Kosoy A."/>
            <person name="Calonge T.M."/>
            <person name="Outwin E.A."/>
            <person name="O'Connell M.J."/>
        </authorList>
    </citation>
    <scope>INTERACTION WITH RFP1</scope>
</reference>
<reference key="9">
    <citation type="journal article" date="2012" name="PLoS Genet.">
        <title>Phosphorylation-dependent interactions between Crb2 and Chk1 are essential for DNA damage checkpoint.</title>
        <authorList>
            <person name="Qu M."/>
            <person name="Yang B."/>
            <person name="Tao L."/>
            <person name="Yates J.R."/>
            <person name="Russell P."/>
            <person name="Dong M.Q."/>
            <person name="Du L.L."/>
        </authorList>
    </citation>
    <scope>INTERACTION WITH CRB2</scope>
</reference>